<feature type="chain" id="PRO_0000064949" description="Flavin reductase (NADPH)">
    <location>
        <begin position="1"/>
        <end position="206"/>
    </location>
</feature>
<feature type="active site" description="S-nitroso-cysteine intermediate; for S-nitroso-CoA-dependent nitrosyltransferase activity" evidence="1">
    <location>
        <position position="109"/>
    </location>
</feature>
<feature type="active site" description="S-nitroso-cysteine intermediate; for S-nitroso-CoA-dependent nitrosyltransferase activity" evidence="1">
    <location>
        <position position="188"/>
    </location>
</feature>
<feature type="binding site" evidence="1">
    <location>
        <position position="10"/>
    </location>
    <ligand>
        <name>NADP(+)</name>
        <dbReference type="ChEBI" id="CHEBI:58349"/>
    </ligand>
</feature>
<feature type="binding site" evidence="1">
    <location>
        <position position="12"/>
    </location>
    <ligand>
        <name>NADP(+)</name>
        <dbReference type="ChEBI" id="CHEBI:58349"/>
    </ligand>
</feature>
<feature type="binding site" evidence="1">
    <location>
        <position position="13"/>
    </location>
    <ligand>
        <name>NADP(+)</name>
        <dbReference type="ChEBI" id="CHEBI:58349"/>
    </ligand>
</feature>
<feature type="binding site" evidence="1">
    <location>
        <position position="15"/>
    </location>
    <ligand>
        <name>NADP(+)</name>
        <dbReference type="ChEBI" id="CHEBI:58349"/>
    </ligand>
</feature>
<feature type="binding site" evidence="1">
    <location>
        <position position="35"/>
    </location>
    <ligand>
        <name>NADP(+)</name>
        <dbReference type="ChEBI" id="CHEBI:58349"/>
    </ligand>
</feature>
<feature type="binding site" evidence="1">
    <location>
        <position position="38"/>
    </location>
    <ligand>
        <name>NADP(+)</name>
        <dbReference type="ChEBI" id="CHEBI:58349"/>
    </ligand>
</feature>
<feature type="binding site" evidence="1">
    <location>
        <position position="39"/>
    </location>
    <ligand>
        <name>NADP(+)</name>
        <dbReference type="ChEBI" id="CHEBI:58349"/>
    </ligand>
</feature>
<feature type="binding site" evidence="1">
    <location>
        <position position="54"/>
    </location>
    <ligand>
        <name>NADP(+)</name>
        <dbReference type="ChEBI" id="CHEBI:58349"/>
    </ligand>
</feature>
<feature type="binding site" evidence="1">
    <location>
        <position position="55"/>
    </location>
    <ligand>
        <name>NADP(+)</name>
        <dbReference type="ChEBI" id="CHEBI:58349"/>
    </ligand>
</feature>
<feature type="binding site" evidence="1">
    <location>
        <position position="75"/>
    </location>
    <ligand>
        <name>NADP(+)</name>
        <dbReference type="ChEBI" id="CHEBI:58349"/>
    </ligand>
</feature>
<feature type="binding site" evidence="1">
    <location>
        <position position="76"/>
    </location>
    <ligand>
        <name>NADP(+)</name>
        <dbReference type="ChEBI" id="CHEBI:58349"/>
    </ligand>
</feature>
<feature type="binding site" evidence="1">
    <location>
        <position position="87"/>
    </location>
    <ligand>
        <name>NADP(+)</name>
        <dbReference type="ChEBI" id="CHEBI:58349"/>
    </ligand>
</feature>
<feature type="binding site" evidence="1">
    <location>
        <position position="109"/>
    </location>
    <ligand>
        <name>NADP(+)</name>
        <dbReference type="ChEBI" id="CHEBI:58349"/>
    </ligand>
</feature>
<feature type="binding site" evidence="1">
    <location>
        <position position="132"/>
    </location>
    <ligand>
        <name>NADP(+)</name>
        <dbReference type="ChEBI" id="CHEBI:58349"/>
    </ligand>
</feature>
<feature type="binding site" evidence="1">
    <location>
        <position position="153"/>
    </location>
    <ligand>
        <name>NADP(+)</name>
        <dbReference type="ChEBI" id="CHEBI:58349"/>
    </ligand>
</feature>
<feature type="binding site" evidence="1">
    <location>
        <position position="154"/>
    </location>
    <ligand>
        <name>NADP(+)</name>
        <dbReference type="ChEBI" id="CHEBI:58349"/>
    </ligand>
</feature>
<feature type="modified residue" description="Phosphoserine" evidence="1">
    <location>
        <position position="42"/>
    </location>
</feature>
<feature type="modified residue" description="Phosphoserine" evidence="1">
    <location>
        <position position="82"/>
    </location>
</feature>
<reference key="1">
    <citation type="journal article" date="2004" name="Genome Res.">
        <title>The status, quality, and expansion of the NIH full-length cDNA project: the Mammalian Gene Collection (MGC).</title>
        <authorList>
            <consortium name="The MGC Project Team"/>
        </authorList>
    </citation>
    <scope>NUCLEOTIDE SEQUENCE [LARGE SCALE MRNA]</scope>
    <source>
        <strain>Czech II</strain>
        <strain>FVB/N</strain>
        <tissue>Mammary tumor</tissue>
    </source>
</reference>
<reference key="2">
    <citation type="journal article" date="2010" name="Cell">
        <title>A tissue-specific atlas of mouse protein phosphorylation and expression.</title>
        <authorList>
            <person name="Huttlin E.L."/>
            <person name="Jedrychowski M.P."/>
            <person name="Elias J.E."/>
            <person name="Goswami T."/>
            <person name="Rad R."/>
            <person name="Beausoleil S.A."/>
            <person name="Villen J."/>
            <person name="Haas W."/>
            <person name="Sowa M.E."/>
            <person name="Gygi S.P."/>
        </authorList>
    </citation>
    <scope>IDENTIFICATION BY MASS SPECTROMETRY [LARGE SCALE ANALYSIS]</scope>
    <source>
        <tissue>Brain</tissue>
        <tissue>Brown adipose tissue</tissue>
        <tissue>Heart</tissue>
        <tissue>Kidney</tissue>
        <tissue>Liver</tissue>
        <tissue>Lung</tissue>
        <tissue>Pancreas</tissue>
        <tissue>Spleen</tissue>
        <tissue>Testis</tissue>
    </source>
</reference>
<reference key="3">
    <citation type="journal article" date="2021" name="Free Radic. Biol. Med.">
        <title>Divergent erythroid megakaryocyte fates in Blvrb-deficient mice establish non-overlapping cytoprotective functions during stress hematopoiesis.</title>
        <authorList>
            <person name="Nesbitt N.M."/>
            <person name="Malone L.E."/>
            <person name="Liu Z."/>
            <person name="Jares A."/>
            <person name="Gnatenko D.V."/>
            <person name="Ma Y."/>
            <person name="Zhu W."/>
            <person name="Bahou W.F."/>
        </authorList>
    </citation>
    <scope>FUNCTION</scope>
    <scope>DISRUPTION PHENOTYPE</scope>
</reference>
<reference key="4">
    <citation type="journal article" date="2023" name="Cell">
        <title>An enzyme that selectively S-nitrosylates proteins to regulate insulin signaling.</title>
        <authorList>
            <person name="Zhou H.L."/>
            <person name="Grimmett Z.W."/>
            <person name="Venetos N.M."/>
            <person name="Stomberski C.T."/>
            <person name="Qian Z."/>
            <person name="McLaughlin P.J."/>
            <person name="Bansal P.K."/>
            <person name="Zhang R."/>
            <person name="Reynolds J.D."/>
            <person name="Premont R.T."/>
            <person name="Stamler J.S."/>
        </authorList>
    </citation>
    <scope>FUNCTION</scope>
    <scope>CATALYTIC ACTIVITY</scope>
    <scope>BIOPHYSICOCHEMICAL PROPERTIES</scope>
    <scope>DISRUPTION PHENOTYPE</scope>
</reference>
<evidence type="ECO:0000250" key="1">
    <source>
        <dbReference type="UniProtKB" id="P30043"/>
    </source>
</evidence>
<evidence type="ECO:0000269" key="2">
    <source>
    </source>
</evidence>
<evidence type="ECO:0000269" key="3">
    <source>
    </source>
</evidence>
<evidence type="ECO:0000303" key="4">
    <source>
    </source>
</evidence>
<evidence type="ECO:0000305" key="5"/>
<evidence type="ECO:0000305" key="6">
    <source>
    </source>
</evidence>
<name>BLVRB_MOUSE</name>
<accession>Q923D2</accession>
<gene>
    <name type="primary">Blvrb</name>
    <name evidence="4" type="synonym">Scan</name>
</gene>
<organism>
    <name type="scientific">Mus musculus</name>
    <name type="common">Mouse</name>
    <dbReference type="NCBI Taxonomy" id="10090"/>
    <lineage>
        <taxon>Eukaryota</taxon>
        <taxon>Metazoa</taxon>
        <taxon>Chordata</taxon>
        <taxon>Craniata</taxon>
        <taxon>Vertebrata</taxon>
        <taxon>Euteleostomi</taxon>
        <taxon>Mammalia</taxon>
        <taxon>Eutheria</taxon>
        <taxon>Euarchontoglires</taxon>
        <taxon>Glires</taxon>
        <taxon>Rodentia</taxon>
        <taxon>Myomorpha</taxon>
        <taxon>Muroidea</taxon>
        <taxon>Muridae</taxon>
        <taxon>Murinae</taxon>
        <taxon>Mus</taxon>
        <taxon>Mus</taxon>
    </lineage>
</organism>
<protein>
    <recommendedName>
        <fullName>Flavin reductase (NADPH)</fullName>
        <shortName>FR</shortName>
        <ecNumber evidence="1">1.5.1.30</ecNumber>
    </recommendedName>
    <alternativeName>
        <fullName>Biliverdin reductase B</fullName>
        <shortName>BVR-B</shortName>
    </alternativeName>
    <alternativeName>
        <fullName>Biliverdin-IX beta-reductase</fullName>
        <ecNumber evidence="1">1.3.1.-</ecNumber>
    </alternativeName>
    <alternativeName>
        <fullName>NADPH-dependent diaphorase</fullName>
    </alternativeName>
    <alternativeName>
        <fullName>NADPH-flavin reductase</fullName>
        <shortName>FLR</shortName>
    </alternativeName>
    <alternativeName>
        <fullName evidence="4">S-nitroso-CoA-assisted nitrosyltransferase</fullName>
        <shortName evidence="4">SNO-CoA-assisted nitrosyltransferase</shortName>
        <ecNumber evidence="1">2.6.99.-</ecNumber>
    </alternativeName>
</protein>
<sequence length="206" mass="22197">MTVKKIAIFGATGRTGLTTLAQAVQAGYEVTVLVRDSSRLPSEGPQPAHVVVGDVRQAADVDKTVAGQEAVIVLLGTGNDLSPTTVMSEGTRNIVTAMKAHGVDKVVACTSAFLLWDPTKVPPRLQDVTDDHIRMHKILQESGLKYVAVMPPHIGDQPLTGAYTVTLDGRGPSRVISKHDLGHFMLRCLTTNEYDGHTTYPSHQYD</sequence>
<dbReference type="EC" id="1.5.1.30" evidence="1"/>
<dbReference type="EC" id="1.3.1.-" evidence="1"/>
<dbReference type="EC" id="2.6.99.-" evidence="1"/>
<dbReference type="EMBL" id="BC006617">
    <property type="protein sequence ID" value="AAH06617.1"/>
    <property type="molecule type" value="mRNA"/>
</dbReference>
<dbReference type="EMBL" id="BC027279">
    <property type="protein sequence ID" value="AAH27279.1"/>
    <property type="molecule type" value="mRNA"/>
</dbReference>
<dbReference type="CCDS" id="CCDS39848.1"/>
<dbReference type="RefSeq" id="NP_659172.1">
    <property type="nucleotide sequence ID" value="NM_144923.4"/>
</dbReference>
<dbReference type="SMR" id="Q923D2"/>
<dbReference type="BioGRID" id="231349">
    <property type="interactions" value="1"/>
</dbReference>
<dbReference type="FunCoup" id="Q923D2">
    <property type="interactions" value="1012"/>
</dbReference>
<dbReference type="STRING" id="10090.ENSMUSP00000043092"/>
<dbReference type="GlyGen" id="Q923D2">
    <property type="glycosylation" value="1 site, 1 O-linked glycan (1 site)"/>
</dbReference>
<dbReference type="iPTMnet" id="Q923D2"/>
<dbReference type="PhosphoSitePlus" id="Q923D2"/>
<dbReference type="SwissPalm" id="Q923D2"/>
<dbReference type="CPTAC" id="non-CPTAC-3896"/>
<dbReference type="jPOST" id="Q923D2"/>
<dbReference type="PaxDb" id="10090-ENSMUSP00000043092"/>
<dbReference type="ProteomicsDB" id="265306"/>
<dbReference type="Pumba" id="Q923D2"/>
<dbReference type="Antibodypedia" id="30531">
    <property type="antibodies" value="347 antibodies from 34 providers"/>
</dbReference>
<dbReference type="DNASU" id="233016"/>
<dbReference type="Ensembl" id="ENSMUST00000037399.16">
    <property type="protein sequence ID" value="ENSMUSP00000043092.10"/>
    <property type="gene ID" value="ENSMUSG00000040466.17"/>
</dbReference>
<dbReference type="GeneID" id="233016"/>
<dbReference type="KEGG" id="mmu:233016"/>
<dbReference type="UCSC" id="uc009fwd.1">
    <property type="organism name" value="mouse"/>
</dbReference>
<dbReference type="AGR" id="MGI:2385271"/>
<dbReference type="CTD" id="645"/>
<dbReference type="MGI" id="MGI:2385271">
    <property type="gene designation" value="Blvrb"/>
</dbReference>
<dbReference type="VEuPathDB" id="HostDB:ENSMUSG00000040466"/>
<dbReference type="eggNOG" id="ENOG502RY9R">
    <property type="taxonomic scope" value="Eukaryota"/>
</dbReference>
<dbReference type="GeneTree" id="ENSGT00390000014810"/>
<dbReference type="HOGENOM" id="CLU_025711_2_0_1"/>
<dbReference type="InParanoid" id="Q923D2"/>
<dbReference type="OMA" id="ACKKIAI"/>
<dbReference type="OrthoDB" id="52992at9989"/>
<dbReference type="PhylomeDB" id="Q923D2"/>
<dbReference type="TreeFam" id="TF324063"/>
<dbReference type="Reactome" id="R-MMU-189483">
    <property type="pathway name" value="Heme degradation"/>
</dbReference>
<dbReference type="Reactome" id="R-MMU-9707564">
    <property type="pathway name" value="Cytoprotection by HMOX1"/>
</dbReference>
<dbReference type="BioGRID-ORCS" id="233016">
    <property type="hits" value="2 hits in 79 CRISPR screens"/>
</dbReference>
<dbReference type="PRO" id="PR:Q923D2"/>
<dbReference type="Proteomes" id="UP000000589">
    <property type="component" value="Chromosome 7"/>
</dbReference>
<dbReference type="RNAct" id="Q923D2">
    <property type="molecule type" value="protein"/>
</dbReference>
<dbReference type="Bgee" id="ENSMUSG00000040466">
    <property type="expression patterns" value="Expressed in fetal liver hematopoietic progenitor cell and 193 other cell types or tissues"/>
</dbReference>
<dbReference type="ExpressionAtlas" id="Q923D2">
    <property type="expression patterns" value="baseline and differential"/>
</dbReference>
<dbReference type="GO" id="GO:0005829">
    <property type="term" value="C:cytosol"/>
    <property type="evidence" value="ECO:0000250"/>
    <property type="project" value="UniProtKB"/>
</dbReference>
<dbReference type="GO" id="GO:0005654">
    <property type="term" value="C:nucleoplasm"/>
    <property type="evidence" value="ECO:0007669"/>
    <property type="project" value="Ensembl"/>
</dbReference>
<dbReference type="GO" id="GO:0005886">
    <property type="term" value="C:plasma membrane"/>
    <property type="evidence" value="ECO:0007669"/>
    <property type="project" value="Ensembl"/>
</dbReference>
<dbReference type="GO" id="GO:0004074">
    <property type="term" value="F:biliverdin reductase [NAD(P)+] activity"/>
    <property type="evidence" value="ECO:0000250"/>
    <property type="project" value="UniProtKB"/>
</dbReference>
<dbReference type="GO" id="GO:0052874">
    <property type="term" value="F:FMN reductase (NADH) activity"/>
    <property type="evidence" value="ECO:0007669"/>
    <property type="project" value="RHEA"/>
</dbReference>
<dbReference type="GO" id="GO:0052873">
    <property type="term" value="F:FMN reductase (NADPH) activity"/>
    <property type="evidence" value="ECO:0007669"/>
    <property type="project" value="RHEA"/>
</dbReference>
<dbReference type="GO" id="GO:0035605">
    <property type="term" value="F:peptidyl-cysteine S-nitrosylase activity"/>
    <property type="evidence" value="ECO:0000314"/>
    <property type="project" value="UniProtKB"/>
</dbReference>
<dbReference type="GO" id="GO:0042602">
    <property type="term" value="F:riboflavin reductase (NADPH) activity"/>
    <property type="evidence" value="ECO:0000250"/>
    <property type="project" value="UniProtKB"/>
</dbReference>
<dbReference type="GO" id="GO:0042167">
    <property type="term" value="P:heme catabolic process"/>
    <property type="evidence" value="ECO:0000250"/>
    <property type="project" value="UniProtKB"/>
</dbReference>
<dbReference type="GO" id="GO:0030219">
    <property type="term" value="P:megakaryocyte differentiation"/>
    <property type="evidence" value="ECO:0000250"/>
    <property type="project" value="UniProtKB"/>
</dbReference>
<dbReference type="GO" id="GO:0046627">
    <property type="term" value="P:negative regulation of insulin receptor signaling pathway"/>
    <property type="evidence" value="ECO:0000314"/>
    <property type="project" value="UniProtKB"/>
</dbReference>
<dbReference type="CDD" id="cd05244">
    <property type="entry name" value="BVR-B_like_SDR_a"/>
    <property type="match status" value="1"/>
</dbReference>
<dbReference type="FunFam" id="3.40.50.720:FF:000369">
    <property type="entry name" value="flavin reductase (NADPH)"/>
    <property type="match status" value="1"/>
</dbReference>
<dbReference type="Gene3D" id="3.40.50.720">
    <property type="entry name" value="NAD(P)-binding Rossmann-like Domain"/>
    <property type="match status" value="1"/>
</dbReference>
<dbReference type="InterPro" id="IPR016040">
    <property type="entry name" value="NAD(P)-bd_dom"/>
</dbReference>
<dbReference type="InterPro" id="IPR036291">
    <property type="entry name" value="NAD(P)-bd_dom_sf"/>
</dbReference>
<dbReference type="InterPro" id="IPR051606">
    <property type="entry name" value="Polyketide_Oxido-like"/>
</dbReference>
<dbReference type="PANTHER" id="PTHR43355">
    <property type="entry name" value="FLAVIN REDUCTASE (NADPH)"/>
    <property type="match status" value="1"/>
</dbReference>
<dbReference type="PANTHER" id="PTHR43355:SF2">
    <property type="entry name" value="FLAVIN REDUCTASE (NADPH)"/>
    <property type="match status" value="1"/>
</dbReference>
<dbReference type="Pfam" id="PF13460">
    <property type="entry name" value="NAD_binding_10"/>
    <property type="match status" value="1"/>
</dbReference>
<dbReference type="SUPFAM" id="SSF51735">
    <property type="entry name" value="NAD(P)-binding Rossmann-fold domains"/>
    <property type="match status" value="1"/>
</dbReference>
<comment type="function">
    <text evidence="1 2 3">Enzyme that can both act as a NAD(P)H-dependent reductase and a S-nitroso-CoA-dependent nitrosyltransferase (PubMed:38056462). Promotes fetal heme degradation during development (By similarity). Also expressed in adult tissues, where it acts as a regulator of hematopoiesis, intermediary metabolism (glutaminolysis, glycolysis, TCA cycle and pentose phosphate pathway) and insulin signaling (PubMed:33359909, PubMed:38056462). Has a broad specificity oxidoreductase activity by catalyzing the NAD(P)H-dependent reduction of a variety of flavins, such as riboflavin, FAD or FMN, biliverdins, methemoglobin and PQQ (pyrroloquinoline quinone) (By similarity). Contributes to fetal heme catabolism by catalyzing reduction of biliverdin IXbeta into bilirubin IXbeta in the liver (By similarity). Biliverdin IXbeta, which constitutes the major heme catabolite in the fetus is not present in adult (By similarity). Does not reduce bilirubin IXalpha (By similarity). Can also reduce the complexed Fe(3+) iron to Fe(2+) in the presence of FMN and NADPH (By similarity). Acts as a protein nitrosyltransferase by catalyzing nitrosylation of cysteine residues of target proteins, such as HMOX2, INSR and IRS1 (PubMed:38056462). S-nitroso-CoA-dependent nitrosyltransferase activity is mediated via a 'ping-pong' mechanism: BLVRB first associates with both S-nitroso-CoA and protein substrate, nitric oxide group is then transferred from S-nitroso-CoA to Cys-109 and Cys-188 residues of BLVRB and from S-nitroso-BLVRB to the protein substrate (By similarity). Inhibits insulin signaling by mediating nitrosylation of INSR and IRS1, leading to their inhibition (PubMed:38056462).</text>
</comment>
<comment type="catalytic activity">
    <reaction evidence="1">
        <text>reduced riboflavin + NADP(+) = riboflavin + NADPH + 2 H(+)</text>
        <dbReference type="Rhea" id="RHEA:19377"/>
        <dbReference type="ChEBI" id="CHEBI:15378"/>
        <dbReference type="ChEBI" id="CHEBI:17607"/>
        <dbReference type="ChEBI" id="CHEBI:57783"/>
        <dbReference type="ChEBI" id="CHEBI:57986"/>
        <dbReference type="ChEBI" id="CHEBI:58349"/>
        <dbReference type="EC" id="1.5.1.30"/>
    </reaction>
    <physiologicalReaction direction="right-to-left" evidence="1">
        <dbReference type="Rhea" id="RHEA:19379"/>
    </physiologicalReaction>
</comment>
<comment type="catalytic activity">
    <reaction evidence="1">
        <text>bilirubin IXbeta + NADP(+) = biliverdin IXbeta + NADPH + H(+)</text>
        <dbReference type="Rhea" id="RHEA:78395"/>
        <dbReference type="ChEBI" id="CHEBI:15378"/>
        <dbReference type="ChEBI" id="CHEBI:57783"/>
        <dbReference type="ChEBI" id="CHEBI:58349"/>
        <dbReference type="ChEBI" id="CHEBI:136509"/>
        <dbReference type="ChEBI" id="CHEBI:228295"/>
    </reaction>
    <physiologicalReaction direction="right-to-left" evidence="1">
        <dbReference type="Rhea" id="RHEA:78397"/>
    </physiologicalReaction>
</comment>
<comment type="catalytic activity">
    <reaction evidence="1">
        <text>FMNH2 + NAD(+) = FMN + NADH + 2 H(+)</text>
        <dbReference type="Rhea" id="RHEA:21620"/>
        <dbReference type="ChEBI" id="CHEBI:15378"/>
        <dbReference type="ChEBI" id="CHEBI:57540"/>
        <dbReference type="ChEBI" id="CHEBI:57618"/>
        <dbReference type="ChEBI" id="CHEBI:57945"/>
        <dbReference type="ChEBI" id="CHEBI:58210"/>
    </reaction>
    <physiologicalReaction direction="right-to-left" evidence="1">
        <dbReference type="Rhea" id="RHEA:21622"/>
    </physiologicalReaction>
</comment>
<comment type="catalytic activity">
    <reaction evidence="1">
        <text>FMNH2 + NADP(+) = FMN + NADPH + 2 H(+)</text>
        <dbReference type="Rhea" id="RHEA:21624"/>
        <dbReference type="ChEBI" id="CHEBI:15378"/>
        <dbReference type="ChEBI" id="CHEBI:57618"/>
        <dbReference type="ChEBI" id="CHEBI:57783"/>
        <dbReference type="ChEBI" id="CHEBI:58210"/>
        <dbReference type="ChEBI" id="CHEBI:58349"/>
    </reaction>
    <physiologicalReaction direction="right-to-left" evidence="1">
        <dbReference type="Rhea" id="RHEA:21626"/>
    </physiologicalReaction>
</comment>
<comment type="catalytic activity">
    <reaction evidence="3">
        <text>S-nitroso-CoA + L-cysteinyl-[protein] = S-nitroso-L-cysteinyl-[protein] + CoA</text>
        <dbReference type="Rhea" id="RHEA:78379"/>
        <dbReference type="Rhea" id="RHEA-COMP:10131"/>
        <dbReference type="Rhea" id="RHEA-COMP:17091"/>
        <dbReference type="ChEBI" id="CHEBI:29950"/>
        <dbReference type="ChEBI" id="CHEBI:57287"/>
        <dbReference type="ChEBI" id="CHEBI:145546"/>
        <dbReference type="ChEBI" id="CHEBI:149494"/>
    </reaction>
    <physiologicalReaction direction="left-to-right" evidence="3">
        <dbReference type="Rhea" id="RHEA:78380"/>
    </physiologicalReaction>
</comment>
<comment type="catalytic activity">
    <reaction evidence="6">
        <text>L-cysteinyl-[SCAN] + S-nitroso-CoA = S-nitroso-L-cysteinyl-[SCAN] + CoA</text>
        <dbReference type="Rhea" id="RHEA:78383"/>
        <dbReference type="Rhea" id="RHEA-COMP:19068"/>
        <dbReference type="Rhea" id="RHEA-COMP:19069"/>
        <dbReference type="ChEBI" id="CHEBI:29950"/>
        <dbReference type="ChEBI" id="CHEBI:57287"/>
        <dbReference type="ChEBI" id="CHEBI:145546"/>
        <dbReference type="ChEBI" id="CHEBI:149494"/>
    </reaction>
    <physiologicalReaction direction="left-to-right" evidence="6">
        <dbReference type="Rhea" id="RHEA:78384"/>
    </physiologicalReaction>
</comment>
<comment type="catalytic activity">
    <reaction evidence="6">
        <text>S-nitroso-L-cysteinyl-[SCAN] + L-cysteinyl-[protein] = L-cysteinyl-[SCAN] + S-nitroso-L-cysteinyl-[protein]</text>
        <dbReference type="Rhea" id="RHEA:78387"/>
        <dbReference type="Rhea" id="RHEA-COMP:10131"/>
        <dbReference type="Rhea" id="RHEA-COMP:17091"/>
        <dbReference type="Rhea" id="RHEA-COMP:19068"/>
        <dbReference type="Rhea" id="RHEA-COMP:19069"/>
        <dbReference type="ChEBI" id="CHEBI:29950"/>
        <dbReference type="ChEBI" id="CHEBI:149494"/>
    </reaction>
    <physiologicalReaction direction="left-to-right" evidence="6">
        <dbReference type="Rhea" id="RHEA:78388"/>
    </physiologicalReaction>
</comment>
<comment type="biophysicochemical properties">
    <kinetics>
        <KM evidence="3">0.96 uM for INSR substrate</KM>
        <KM evidence="3">4.57 uM for IRS1 substrate</KM>
    </kinetics>
</comment>
<comment type="subunit">
    <text evidence="1">Monomer.</text>
</comment>
<comment type="subcellular location">
    <subcellularLocation>
        <location evidence="1">Cytoplasm</location>
    </subcellularLocation>
</comment>
<comment type="disruption phenotype">
    <text evidence="2 3">Adult mice do not show defects in biliverdin degradation or hematopoiesis (PubMed:33359909, PubMed:38056462). Impaired cytoprotective function in stress hematopoiesis, characterized by divergent erythroid megakaryocyte fates (PubMed:33359909). Defective stress erythropoiesis is observed in spleens and in bone marrow erythroid development, in conjunction with defective lipid peroxidation (PubMed:33359909). Mice on high-fat diet gain weight more slowly than wild-type mice and are protected from diabetes due to improved insulin sensitivity (PubMed:38056462).</text>
</comment>
<comment type="similarity">
    <text evidence="5">Belongs to the BLVRB family.</text>
</comment>
<keyword id="KW-0963">Cytoplasm</keyword>
<keyword id="KW-0521">NADP</keyword>
<keyword id="KW-0560">Oxidoreductase</keyword>
<keyword id="KW-0597">Phosphoprotein</keyword>
<keyword id="KW-1185">Reference proteome</keyword>
<keyword id="KW-0808">Transferase</keyword>
<proteinExistence type="evidence at protein level"/>